<comment type="function">
    <text evidence="1">Promotes the formation of filopodia. May activate CDC42, a member of the Ras-like family of Rho- and Rac proteins, by exchanging bound GDP for free GTP. Plays a role in regulating the actin cytoskeleton and cell shape (By similarity).</text>
</comment>
<comment type="subcellular location">
    <subcellularLocation>
        <location evidence="8">Cytoplasm</location>
    </subcellularLocation>
    <subcellularLocation>
        <location evidence="8">Cytoplasm</location>
        <location evidence="8">Cytoskeleton</location>
    </subcellularLocation>
</comment>
<comment type="alternative products">
    <event type="alternative splicing"/>
    <isoform>
        <id>Q5JSP0-1</id>
        <name>1</name>
        <sequence type="displayed"/>
    </isoform>
    <isoform>
        <id>Q5JSP0-2</id>
        <name>2</name>
        <sequence type="described" ref="VSP_013074 VSP_013075"/>
    </isoform>
    <isoform>
        <id>Q5JSP0-3</id>
        <name>3</name>
        <sequence type="described" ref="VSP_055703"/>
    </isoform>
</comment>
<organism>
    <name type="scientific">Homo sapiens</name>
    <name type="common">Human</name>
    <dbReference type="NCBI Taxonomy" id="9606"/>
    <lineage>
        <taxon>Eukaryota</taxon>
        <taxon>Metazoa</taxon>
        <taxon>Chordata</taxon>
        <taxon>Craniata</taxon>
        <taxon>Vertebrata</taxon>
        <taxon>Euteleostomi</taxon>
        <taxon>Mammalia</taxon>
        <taxon>Eutheria</taxon>
        <taxon>Euarchontoglires</taxon>
        <taxon>Primates</taxon>
        <taxon>Haplorrhini</taxon>
        <taxon>Catarrhini</taxon>
        <taxon>Hominidae</taxon>
        <taxon>Homo</taxon>
    </lineage>
</organism>
<feature type="chain" id="PRO_0000080944" description="FYVE, RhoGEF and PH domain-containing protein 3">
    <location>
        <begin position="1"/>
        <end position="725"/>
    </location>
</feature>
<feature type="domain" description="DH" evidence="2">
    <location>
        <begin position="157"/>
        <end position="341"/>
    </location>
</feature>
<feature type="domain" description="PH 1" evidence="4">
    <location>
        <begin position="370"/>
        <end position="469"/>
    </location>
</feature>
<feature type="domain" description="PH 2" evidence="4">
    <location>
        <begin position="604"/>
        <end position="703"/>
    </location>
</feature>
<feature type="zinc finger region" description="FYVE-type" evidence="3">
    <location>
        <begin position="532"/>
        <end position="588"/>
    </location>
</feature>
<feature type="region of interest" description="Disordered" evidence="5">
    <location>
        <begin position="1"/>
        <end position="151"/>
    </location>
</feature>
<feature type="region of interest" description="Disordered" evidence="5">
    <location>
        <begin position="487"/>
        <end position="532"/>
    </location>
</feature>
<feature type="region of interest" description="Disordered" evidence="5">
    <location>
        <begin position="703"/>
        <end position="725"/>
    </location>
</feature>
<feature type="compositionally biased region" description="Acidic residues" evidence="5">
    <location>
        <begin position="124"/>
        <end position="136"/>
    </location>
</feature>
<feature type="compositionally biased region" description="Low complexity" evidence="5">
    <location>
        <begin position="500"/>
        <end position="512"/>
    </location>
</feature>
<feature type="compositionally biased region" description="Basic and acidic residues" evidence="5">
    <location>
        <begin position="521"/>
        <end position="532"/>
    </location>
</feature>
<feature type="binding site" evidence="3">
    <location>
        <position position="538"/>
    </location>
    <ligand>
        <name>Zn(2+)</name>
        <dbReference type="ChEBI" id="CHEBI:29105"/>
        <label>1</label>
    </ligand>
</feature>
<feature type="binding site" evidence="3">
    <location>
        <position position="541"/>
    </location>
    <ligand>
        <name>Zn(2+)</name>
        <dbReference type="ChEBI" id="CHEBI:29105"/>
        <label>1</label>
    </ligand>
</feature>
<feature type="binding site" evidence="3">
    <location>
        <position position="555"/>
    </location>
    <ligand>
        <name>Zn(2+)</name>
        <dbReference type="ChEBI" id="CHEBI:29105"/>
        <label>2</label>
    </ligand>
</feature>
<feature type="binding site" evidence="3">
    <location>
        <position position="558"/>
    </location>
    <ligand>
        <name>Zn(2+)</name>
        <dbReference type="ChEBI" id="CHEBI:29105"/>
        <label>2</label>
    </ligand>
</feature>
<feature type="binding site" evidence="3">
    <location>
        <position position="563"/>
    </location>
    <ligand>
        <name>Zn(2+)</name>
        <dbReference type="ChEBI" id="CHEBI:29105"/>
        <label>1</label>
    </ligand>
</feature>
<feature type="binding site" evidence="3">
    <location>
        <position position="566"/>
    </location>
    <ligand>
        <name>Zn(2+)</name>
        <dbReference type="ChEBI" id="CHEBI:29105"/>
        <label>1</label>
    </ligand>
</feature>
<feature type="binding site" evidence="3">
    <location>
        <position position="580"/>
    </location>
    <ligand>
        <name>Zn(2+)</name>
        <dbReference type="ChEBI" id="CHEBI:29105"/>
        <label>2</label>
    </ligand>
</feature>
<feature type="binding site" evidence="3">
    <location>
        <position position="583"/>
    </location>
    <ligand>
        <name>Zn(2+)</name>
        <dbReference type="ChEBI" id="CHEBI:29105"/>
        <label>2</label>
    </ligand>
</feature>
<feature type="modified residue" description="Phosphoserine" evidence="9 10 11">
    <location>
        <position position="128"/>
    </location>
</feature>
<feature type="splice variant" id="VSP_013074" description="In isoform 2." evidence="7">
    <original>KTPTADPQPSLLCGPLRLSESGETWSEVWAAIPMSDPQV</original>
    <variation>VGAPSSCSPPGGAAEPPDTCSCAPAAPAASAFGVSLGPG</variation>
    <location>
        <begin position="596"/>
        <end position="634"/>
    </location>
</feature>
<feature type="splice variant" id="VSP_055703" description="In isoform 3." evidence="8">
    <location>
        <position position="596"/>
    </location>
</feature>
<feature type="splice variant" id="VSP_013075" description="In isoform 2." evidence="7">
    <location>
        <begin position="635"/>
        <end position="725"/>
    </location>
</feature>
<feature type="sequence variant" id="VAR_021492" description="In dbSNP:rs3802384." evidence="6">
    <original>V</original>
    <variation>I</variation>
    <location>
        <position position="275"/>
    </location>
</feature>
<feature type="strand" evidence="12">
    <location>
        <begin position="605"/>
        <end position="618"/>
    </location>
</feature>
<feature type="strand" evidence="12">
    <location>
        <begin position="620"/>
        <end position="626"/>
    </location>
</feature>
<feature type="strand" evidence="12">
    <location>
        <begin position="635"/>
        <end position="638"/>
    </location>
</feature>
<feature type="strand" evidence="12">
    <location>
        <begin position="644"/>
        <end position="646"/>
    </location>
</feature>
<feature type="strand" evidence="12">
    <location>
        <begin position="648"/>
        <end position="650"/>
    </location>
</feature>
<feature type="helix" evidence="12">
    <location>
        <begin position="652"/>
        <end position="654"/>
    </location>
</feature>
<feature type="strand" evidence="12">
    <location>
        <begin position="656"/>
        <end position="658"/>
    </location>
</feature>
<feature type="strand" evidence="12">
    <location>
        <begin position="662"/>
        <end position="664"/>
    </location>
</feature>
<feature type="strand" evidence="12">
    <location>
        <begin position="667"/>
        <end position="676"/>
    </location>
</feature>
<feature type="strand" evidence="12">
    <location>
        <begin position="679"/>
        <end position="687"/>
    </location>
</feature>
<feature type="helix" evidence="12">
    <location>
        <begin position="688"/>
        <end position="702"/>
    </location>
</feature>
<gene>
    <name type="primary">FGD3</name>
    <name type="synonym">ZFYVE5</name>
</gene>
<protein>
    <recommendedName>
        <fullName>FYVE, RhoGEF and PH domain-containing protein 3</fullName>
    </recommendedName>
    <alternativeName>
        <fullName>Zinc finger FYVE domain-containing protein 5</fullName>
    </alternativeName>
</protein>
<proteinExistence type="evidence at protein level"/>
<dbReference type="EMBL" id="AY211386">
    <property type="protein sequence ID" value="AAP20645.1"/>
    <property type="molecule type" value="mRNA"/>
</dbReference>
<dbReference type="EMBL" id="AL389924">
    <property type="status" value="NOT_ANNOTATED_CDS"/>
    <property type="molecule type" value="Genomic_DNA"/>
</dbReference>
<dbReference type="EMBL" id="AL451065">
    <property type="status" value="NOT_ANNOTATED_CDS"/>
    <property type="molecule type" value="Genomic_DNA"/>
</dbReference>
<dbReference type="EMBL" id="BC032429">
    <property type="protein sequence ID" value="AAH32429.1"/>
    <property type="molecule type" value="mRNA"/>
</dbReference>
<dbReference type="EMBL" id="BC111054">
    <property type="protein sequence ID" value="AAI11055.1"/>
    <property type="molecule type" value="mRNA"/>
</dbReference>
<dbReference type="CCDS" id="CCDS43849.1">
    <molecule id="Q5JSP0-1"/>
</dbReference>
<dbReference type="CCDS" id="CCDS69619.1">
    <molecule id="Q5JSP0-3"/>
</dbReference>
<dbReference type="RefSeq" id="NP_001077005.1">
    <molecule id="Q5JSP0-1"/>
    <property type="nucleotide sequence ID" value="NM_001083536.2"/>
</dbReference>
<dbReference type="RefSeq" id="NP_001273922.1">
    <molecule id="Q5JSP0-3"/>
    <property type="nucleotide sequence ID" value="NM_001286993.2"/>
</dbReference>
<dbReference type="RefSeq" id="NP_001356880.1">
    <molecule id="Q5JSP0-1"/>
    <property type="nucleotide sequence ID" value="NM_001369951.1"/>
</dbReference>
<dbReference type="RefSeq" id="NP_149077.2">
    <molecule id="Q5JSP0-1"/>
    <property type="nucleotide sequence ID" value="NM_033086.3"/>
</dbReference>
<dbReference type="RefSeq" id="XP_016870763.1">
    <property type="nucleotide sequence ID" value="XM_017015274.1"/>
</dbReference>
<dbReference type="PDB" id="2COC">
    <property type="method" value="NMR"/>
    <property type="chains" value="A=605-703"/>
</dbReference>
<dbReference type="PDBsum" id="2COC"/>
<dbReference type="BMRB" id="Q5JSP0"/>
<dbReference type="SMR" id="Q5JSP0"/>
<dbReference type="BioGRID" id="124618">
    <property type="interactions" value="7"/>
</dbReference>
<dbReference type="FunCoup" id="Q5JSP0">
    <property type="interactions" value="443"/>
</dbReference>
<dbReference type="IntAct" id="Q5JSP0">
    <property type="interactions" value="5"/>
</dbReference>
<dbReference type="STRING" id="9606.ENSP00000336914"/>
<dbReference type="GlyGen" id="Q5JSP0">
    <property type="glycosylation" value="2 sites, 1 O-linked glycan (1 site)"/>
</dbReference>
<dbReference type="iPTMnet" id="Q5JSP0"/>
<dbReference type="PhosphoSitePlus" id="Q5JSP0"/>
<dbReference type="BioMuta" id="FGD3"/>
<dbReference type="DMDM" id="61213216"/>
<dbReference type="jPOST" id="Q5JSP0"/>
<dbReference type="MassIVE" id="Q5JSP0"/>
<dbReference type="PaxDb" id="9606-ENSP00000364631"/>
<dbReference type="PeptideAtlas" id="Q5JSP0"/>
<dbReference type="ProteomicsDB" id="29981"/>
<dbReference type="ProteomicsDB" id="63166">
    <molecule id="Q5JSP0-1"/>
</dbReference>
<dbReference type="ProteomicsDB" id="63167">
    <molecule id="Q5JSP0-2"/>
</dbReference>
<dbReference type="TopDownProteomics" id="Q5JSP0-1">
    <molecule id="Q5JSP0-1"/>
</dbReference>
<dbReference type="Antibodypedia" id="28323">
    <property type="antibodies" value="163 antibodies from 21 providers"/>
</dbReference>
<dbReference type="DNASU" id="89846"/>
<dbReference type="Ensembl" id="ENST00000337352.10">
    <molecule id="Q5JSP0-1"/>
    <property type="protein sequence ID" value="ENSP00000336914.6"/>
    <property type="gene ID" value="ENSG00000127084.19"/>
</dbReference>
<dbReference type="Ensembl" id="ENST00000375482.8">
    <molecule id="Q5JSP0-1"/>
    <property type="protein sequence ID" value="ENSP00000364631.3"/>
    <property type="gene ID" value="ENSG00000127084.19"/>
</dbReference>
<dbReference type="Ensembl" id="ENST00000416701.6">
    <molecule id="Q5JSP0-3"/>
    <property type="protein sequence ID" value="ENSP00000413833.2"/>
    <property type="gene ID" value="ENSG00000127084.19"/>
</dbReference>
<dbReference type="Ensembl" id="ENST00000467786.1">
    <molecule id="Q5JSP0-2"/>
    <property type="protein sequence ID" value="ENSP00000432310.1"/>
    <property type="gene ID" value="ENSG00000127084.19"/>
</dbReference>
<dbReference type="Ensembl" id="ENST00000468206.6">
    <molecule id="Q5JSP0-1"/>
    <property type="protein sequence ID" value="ENSP00000496819.1"/>
    <property type="gene ID" value="ENSG00000127084.19"/>
</dbReference>
<dbReference type="GeneID" id="89846"/>
<dbReference type="KEGG" id="hsa:89846"/>
<dbReference type="MANE-Select" id="ENST00000375482.8">
    <property type="protein sequence ID" value="ENSP00000364631.3"/>
    <property type="RefSeq nucleotide sequence ID" value="NM_001083536.2"/>
    <property type="RefSeq protein sequence ID" value="NP_001077005.1"/>
</dbReference>
<dbReference type="UCSC" id="uc004asw.3">
    <molecule id="Q5JSP0-1"/>
    <property type="organism name" value="human"/>
</dbReference>
<dbReference type="AGR" id="HGNC:16027"/>
<dbReference type="CTD" id="89846"/>
<dbReference type="DisGeNET" id="89846"/>
<dbReference type="GeneCards" id="FGD3"/>
<dbReference type="HGNC" id="HGNC:16027">
    <property type="gene designation" value="FGD3"/>
</dbReference>
<dbReference type="HPA" id="ENSG00000127084">
    <property type="expression patterns" value="Tissue enhanced (bone marrow, lymphoid tissue)"/>
</dbReference>
<dbReference type="MIM" id="617554">
    <property type="type" value="gene"/>
</dbReference>
<dbReference type="neXtProt" id="NX_Q5JSP0"/>
<dbReference type="OpenTargets" id="ENSG00000127084"/>
<dbReference type="PharmGKB" id="PA28104"/>
<dbReference type="VEuPathDB" id="HostDB:ENSG00000127084"/>
<dbReference type="eggNOG" id="KOG4424">
    <property type="taxonomic scope" value="Eukaryota"/>
</dbReference>
<dbReference type="GeneTree" id="ENSGT00940000159597"/>
<dbReference type="HOGENOM" id="CLU_011755_1_1_1"/>
<dbReference type="InParanoid" id="Q5JSP0"/>
<dbReference type="OMA" id="RITGEWE"/>
<dbReference type="OrthoDB" id="660555at2759"/>
<dbReference type="PAN-GO" id="Q5JSP0">
    <property type="GO annotations" value="3 GO annotations based on evolutionary models"/>
</dbReference>
<dbReference type="PhylomeDB" id="Q5JSP0"/>
<dbReference type="TreeFam" id="TF316247"/>
<dbReference type="PathwayCommons" id="Q5JSP0"/>
<dbReference type="Reactome" id="R-HSA-193648">
    <property type="pathway name" value="NRAGE signals death through JNK"/>
</dbReference>
<dbReference type="Reactome" id="R-HSA-416482">
    <property type="pathway name" value="G alpha (12/13) signalling events"/>
</dbReference>
<dbReference type="Reactome" id="R-HSA-9013148">
    <property type="pathway name" value="CDC42 GTPase cycle"/>
</dbReference>
<dbReference type="SignaLink" id="Q5JSP0"/>
<dbReference type="SIGNOR" id="Q5JSP0"/>
<dbReference type="BioGRID-ORCS" id="89846">
    <property type="hits" value="10 hits in 1142 CRISPR screens"/>
</dbReference>
<dbReference type="ChiTaRS" id="FGD3">
    <property type="organism name" value="human"/>
</dbReference>
<dbReference type="EvolutionaryTrace" id="Q5JSP0"/>
<dbReference type="GeneWiki" id="FGD3"/>
<dbReference type="GenomeRNAi" id="89846"/>
<dbReference type="Pharos" id="Q5JSP0">
    <property type="development level" value="Tbio"/>
</dbReference>
<dbReference type="PRO" id="PR:Q5JSP0"/>
<dbReference type="Proteomes" id="UP000005640">
    <property type="component" value="Chromosome 9"/>
</dbReference>
<dbReference type="RNAct" id="Q5JSP0">
    <property type="molecule type" value="protein"/>
</dbReference>
<dbReference type="Bgee" id="ENSG00000127084">
    <property type="expression patterns" value="Expressed in granulocyte and 151 other cell types or tissues"/>
</dbReference>
<dbReference type="ExpressionAtlas" id="Q5JSP0">
    <property type="expression patterns" value="baseline and differential"/>
</dbReference>
<dbReference type="GO" id="GO:0005737">
    <property type="term" value="C:cytoplasm"/>
    <property type="evidence" value="ECO:0000250"/>
    <property type="project" value="UniProtKB"/>
</dbReference>
<dbReference type="GO" id="GO:0005856">
    <property type="term" value="C:cytoskeleton"/>
    <property type="evidence" value="ECO:0007669"/>
    <property type="project" value="UniProtKB-SubCell"/>
</dbReference>
<dbReference type="GO" id="GO:0005829">
    <property type="term" value="C:cytosol"/>
    <property type="evidence" value="ECO:0000304"/>
    <property type="project" value="Reactome"/>
</dbReference>
<dbReference type="GO" id="GO:0005794">
    <property type="term" value="C:Golgi apparatus"/>
    <property type="evidence" value="ECO:0000250"/>
    <property type="project" value="UniProtKB"/>
</dbReference>
<dbReference type="GO" id="GO:0030027">
    <property type="term" value="C:lamellipodium"/>
    <property type="evidence" value="ECO:0000250"/>
    <property type="project" value="UniProtKB"/>
</dbReference>
<dbReference type="GO" id="GO:0001726">
    <property type="term" value="C:ruffle"/>
    <property type="evidence" value="ECO:0000250"/>
    <property type="project" value="UniProtKB"/>
</dbReference>
<dbReference type="GO" id="GO:0005085">
    <property type="term" value="F:guanyl-nucleotide exchange factor activity"/>
    <property type="evidence" value="ECO:0000250"/>
    <property type="project" value="UniProtKB"/>
</dbReference>
<dbReference type="GO" id="GO:0031267">
    <property type="term" value="F:small GTPase binding"/>
    <property type="evidence" value="ECO:0000250"/>
    <property type="project" value="UniProtKB"/>
</dbReference>
<dbReference type="GO" id="GO:0008270">
    <property type="term" value="F:zinc ion binding"/>
    <property type="evidence" value="ECO:0007669"/>
    <property type="project" value="UniProtKB-KW"/>
</dbReference>
<dbReference type="GO" id="GO:0030036">
    <property type="term" value="P:actin cytoskeleton organization"/>
    <property type="evidence" value="ECO:0000250"/>
    <property type="project" value="UniProtKB"/>
</dbReference>
<dbReference type="GO" id="GO:0007010">
    <property type="term" value="P:cytoskeleton organization"/>
    <property type="evidence" value="ECO:0000250"/>
    <property type="project" value="UniProtKB"/>
</dbReference>
<dbReference type="GO" id="GO:0046847">
    <property type="term" value="P:filopodium assembly"/>
    <property type="evidence" value="ECO:0000250"/>
    <property type="project" value="UniProtKB"/>
</dbReference>
<dbReference type="GO" id="GO:0008360">
    <property type="term" value="P:regulation of cell shape"/>
    <property type="evidence" value="ECO:0000250"/>
    <property type="project" value="UniProtKB"/>
</dbReference>
<dbReference type="GO" id="GO:0043087">
    <property type="term" value="P:regulation of GTPase activity"/>
    <property type="evidence" value="ECO:0000250"/>
    <property type="project" value="UniProtKB"/>
</dbReference>
<dbReference type="GO" id="GO:0051056">
    <property type="term" value="P:regulation of small GTPase mediated signal transduction"/>
    <property type="evidence" value="ECO:0000304"/>
    <property type="project" value="Reactome"/>
</dbReference>
<dbReference type="CDD" id="cd15740">
    <property type="entry name" value="FYVE_FGD3"/>
    <property type="match status" value="1"/>
</dbReference>
<dbReference type="CDD" id="cd13387">
    <property type="entry name" value="PH1_FGD3"/>
    <property type="match status" value="1"/>
</dbReference>
<dbReference type="CDD" id="cd13236">
    <property type="entry name" value="PH2_FGD1-4"/>
    <property type="match status" value="1"/>
</dbReference>
<dbReference type="CDD" id="cd00160">
    <property type="entry name" value="RhoGEF"/>
    <property type="match status" value="1"/>
</dbReference>
<dbReference type="FunFam" id="2.30.29.30:FF:000389">
    <property type="entry name" value="FYVE, RhoGEF and PH domain containing 3"/>
    <property type="match status" value="1"/>
</dbReference>
<dbReference type="FunFam" id="3.30.40.10:FF:000544">
    <property type="entry name" value="FYVE, RhoGEF and PH domain containing 3"/>
    <property type="match status" value="1"/>
</dbReference>
<dbReference type="FunFam" id="2.30.29.30:FF:000401">
    <property type="entry name" value="FYVE, RhoGEF and PH domain-containing protein 3"/>
    <property type="match status" value="1"/>
</dbReference>
<dbReference type="FunFam" id="1.20.900.10:FF:000013">
    <property type="entry name" value="FYVE, RhoGEF and PH domain-containing protein 4"/>
    <property type="match status" value="1"/>
</dbReference>
<dbReference type="Gene3D" id="1.20.900.10">
    <property type="entry name" value="Dbl homology (DH) domain"/>
    <property type="match status" value="1"/>
</dbReference>
<dbReference type="Gene3D" id="2.30.29.30">
    <property type="entry name" value="Pleckstrin-homology domain (PH domain)/Phosphotyrosine-binding domain (PTB)"/>
    <property type="match status" value="2"/>
</dbReference>
<dbReference type="Gene3D" id="3.30.40.10">
    <property type="entry name" value="Zinc/RING finger domain, C3HC4 (zinc finger)"/>
    <property type="match status" value="1"/>
</dbReference>
<dbReference type="InterPro" id="IPR035899">
    <property type="entry name" value="DBL_dom_sf"/>
</dbReference>
<dbReference type="InterPro" id="IPR000219">
    <property type="entry name" value="DH_dom"/>
</dbReference>
<dbReference type="InterPro" id="IPR035941">
    <property type="entry name" value="FGD1-4_PH2"/>
</dbReference>
<dbReference type="InterPro" id="IPR051092">
    <property type="entry name" value="FYVE_RhoGEF_PH"/>
</dbReference>
<dbReference type="InterPro" id="IPR011993">
    <property type="entry name" value="PH-like_dom_sf"/>
</dbReference>
<dbReference type="InterPro" id="IPR001849">
    <property type="entry name" value="PH_domain"/>
</dbReference>
<dbReference type="InterPro" id="IPR000306">
    <property type="entry name" value="Znf_FYVE"/>
</dbReference>
<dbReference type="InterPro" id="IPR017455">
    <property type="entry name" value="Znf_FYVE-rel"/>
</dbReference>
<dbReference type="InterPro" id="IPR011011">
    <property type="entry name" value="Znf_FYVE_PHD"/>
</dbReference>
<dbReference type="InterPro" id="IPR013083">
    <property type="entry name" value="Znf_RING/FYVE/PHD"/>
</dbReference>
<dbReference type="PANTHER" id="PTHR12673">
    <property type="entry name" value="FACIOGENITAL DYSPLASIA PROTEIN"/>
    <property type="match status" value="1"/>
</dbReference>
<dbReference type="PANTHER" id="PTHR12673:SF14">
    <property type="entry name" value="FYVE, RHOGEF AND PH DOMAIN-CONTAINING PROTEIN 3"/>
    <property type="match status" value="1"/>
</dbReference>
<dbReference type="Pfam" id="PF01363">
    <property type="entry name" value="FYVE"/>
    <property type="match status" value="1"/>
</dbReference>
<dbReference type="Pfam" id="PF00169">
    <property type="entry name" value="PH"/>
    <property type="match status" value="1"/>
</dbReference>
<dbReference type="Pfam" id="PF00621">
    <property type="entry name" value="RhoGEF"/>
    <property type="match status" value="1"/>
</dbReference>
<dbReference type="SMART" id="SM00064">
    <property type="entry name" value="FYVE"/>
    <property type="match status" value="1"/>
</dbReference>
<dbReference type="SMART" id="SM00233">
    <property type="entry name" value="PH"/>
    <property type="match status" value="2"/>
</dbReference>
<dbReference type="SMART" id="SM00325">
    <property type="entry name" value="RhoGEF"/>
    <property type="match status" value="1"/>
</dbReference>
<dbReference type="SUPFAM" id="SSF48065">
    <property type="entry name" value="DBL homology domain (DH-domain)"/>
    <property type="match status" value="1"/>
</dbReference>
<dbReference type="SUPFAM" id="SSF57903">
    <property type="entry name" value="FYVE/PHD zinc finger"/>
    <property type="match status" value="1"/>
</dbReference>
<dbReference type="SUPFAM" id="SSF50729">
    <property type="entry name" value="PH domain-like"/>
    <property type="match status" value="2"/>
</dbReference>
<dbReference type="PROSITE" id="PS50010">
    <property type="entry name" value="DH_2"/>
    <property type="match status" value="1"/>
</dbReference>
<dbReference type="PROSITE" id="PS50003">
    <property type="entry name" value="PH_DOMAIN"/>
    <property type="match status" value="2"/>
</dbReference>
<dbReference type="PROSITE" id="PS50178">
    <property type="entry name" value="ZF_FYVE"/>
    <property type="match status" value="1"/>
</dbReference>
<accession>Q5JSP0</accession>
<accession>F8W7P2</accession>
<accession>Q4VX84</accession>
<accession>Q7Z7D9</accession>
<accession>Q8N5G1</accession>
<name>FGD3_HUMAN</name>
<reference key="1">
    <citation type="submission" date="2003-01" db="EMBL/GenBank/DDBJ databases">
        <title>Cloning and characterization of a human FGD3 gene: a novel faciogenital dysplasia (FGD1; Aarskog syndrome) gene homolog.</title>
        <authorList>
            <person name="Shan Y.X."/>
            <person name="Yu L."/>
        </authorList>
    </citation>
    <scope>NUCLEOTIDE SEQUENCE [MRNA] (ISOFORM 2)</scope>
</reference>
<reference key="2">
    <citation type="journal article" date="2004" name="Nature">
        <title>DNA sequence and analysis of human chromosome 9.</title>
        <authorList>
            <person name="Humphray S.J."/>
            <person name="Oliver K."/>
            <person name="Hunt A.R."/>
            <person name="Plumb R.W."/>
            <person name="Loveland J.E."/>
            <person name="Howe K.L."/>
            <person name="Andrews T.D."/>
            <person name="Searle S."/>
            <person name="Hunt S.E."/>
            <person name="Scott C.E."/>
            <person name="Jones M.C."/>
            <person name="Ainscough R."/>
            <person name="Almeida J.P."/>
            <person name="Ambrose K.D."/>
            <person name="Ashwell R.I.S."/>
            <person name="Babbage A.K."/>
            <person name="Babbage S."/>
            <person name="Bagguley C.L."/>
            <person name="Bailey J."/>
            <person name="Banerjee R."/>
            <person name="Barker D.J."/>
            <person name="Barlow K.F."/>
            <person name="Bates K."/>
            <person name="Beasley H."/>
            <person name="Beasley O."/>
            <person name="Bird C.P."/>
            <person name="Bray-Allen S."/>
            <person name="Brown A.J."/>
            <person name="Brown J.Y."/>
            <person name="Burford D."/>
            <person name="Burrill W."/>
            <person name="Burton J."/>
            <person name="Carder C."/>
            <person name="Carter N.P."/>
            <person name="Chapman J.C."/>
            <person name="Chen Y."/>
            <person name="Clarke G."/>
            <person name="Clark S.Y."/>
            <person name="Clee C.M."/>
            <person name="Clegg S."/>
            <person name="Collier R.E."/>
            <person name="Corby N."/>
            <person name="Crosier M."/>
            <person name="Cummings A.T."/>
            <person name="Davies J."/>
            <person name="Dhami P."/>
            <person name="Dunn M."/>
            <person name="Dutta I."/>
            <person name="Dyer L.W."/>
            <person name="Earthrowl M.E."/>
            <person name="Faulkner L."/>
            <person name="Fleming C.J."/>
            <person name="Frankish A."/>
            <person name="Frankland J.A."/>
            <person name="French L."/>
            <person name="Fricker D.G."/>
            <person name="Garner P."/>
            <person name="Garnett J."/>
            <person name="Ghori J."/>
            <person name="Gilbert J.G.R."/>
            <person name="Glison C."/>
            <person name="Grafham D.V."/>
            <person name="Gribble S."/>
            <person name="Griffiths C."/>
            <person name="Griffiths-Jones S."/>
            <person name="Grocock R."/>
            <person name="Guy J."/>
            <person name="Hall R.E."/>
            <person name="Hammond S."/>
            <person name="Harley J.L."/>
            <person name="Harrison E.S.I."/>
            <person name="Hart E.A."/>
            <person name="Heath P.D."/>
            <person name="Henderson C.D."/>
            <person name="Hopkins B.L."/>
            <person name="Howard P.J."/>
            <person name="Howden P.J."/>
            <person name="Huckle E."/>
            <person name="Johnson C."/>
            <person name="Johnson D."/>
            <person name="Joy A.A."/>
            <person name="Kay M."/>
            <person name="Keenan S."/>
            <person name="Kershaw J.K."/>
            <person name="Kimberley A.M."/>
            <person name="King A."/>
            <person name="Knights A."/>
            <person name="Laird G.K."/>
            <person name="Langford C."/>
            <person name="Lawlor S."/>
            <person name="Leongamornlert D.A."/>
            <person name="Leversha M."/>
            <person name="Lloyd C."/>
            <person name="Lloyd D.M."/>
            <person name="Lovell J."/>
            <person name="Martin S."/>
            <person name="Mashreghi-Mohammadi M."/>
            <person name="Matthews L."/>
            <person name="McLaren S."/>
            <person name="McLay K.E."/>
            <person name="McMurray A."/>
            <person name="Milne S."/>
            <person name="Nickerson T."/>
            <person name="Nisbett J."/>
            <person name="Nordsiek G."/>
            <person name="Pearce A.V."/>
            <person name="Peck A.I."/>
            <person name="Porter K.M."/>
            <person name="Pandian R."/>
            <person name="Pelan S."/>
            <person name="Phillimore B."/>
            <person name="Povey S."/>
            <person name="Ramsey Y."/>
            <person name="Rand V."/>
            <person name="Scharfe M."/>
            <person name="Sehra H.K."/>
            <person name="Shownkeen R."/>
            <person name="Sims S.K."/>
            <person name="Skuce C.D."/>
            <person name="Smith M."/>
            <person name="Steward C.A."/>
            <person name="Swarbreck D."/>
            <person name="Sycamore N."/>
            <person name="Tester J."/>
            <person name="Thorpe A."/>
            <person name="Tracey A."/>
            <person name="Tromans A."/>
            <person name="Thomas D.W."/>
            <person name="Wall M."/>
            <person name="Wallis J.M."/>
            <person name="West A.P."/>
            <person name="Whitehead S.L."/>
            <person name="Willey D.L."/>
            <person name="Williams S.A."/>
            <person name="Wilming L."/>
            <person name="Wray P.W."/>
            <person name="Young L."/>
            <person name="Ashurst J.L."/>
            <person name="Coulson A."/>
            <person name="Blocker H."/>
            <person name="Durbin R.M."/>
            <person name="Sulston J.E."/>
            <person name="Hubbard T."/>
            <person name="Jackson M.J."/>
            <person name="Bentley D.R."/>
            <person name="Beck S."/>
            <person name="Rogers J."/>
            <person name="Dunham I."/>
        </authorList>
    </citation>
    <scope>NUCLEOTIDE SEQUENCE [LARGE SCALE GENOMIC DNA]</scope>
</reference>
<reference key="3">
    <citation type="journal article" date="2004" name="Genome Res.">
        <title>The status, quality, and expansion of the NIH full-length cDNA project: the Mammalian Gene Collection (MGC).</title>
        <authorList>
            <consortium name="The MGC Project Team"/>
        </authorList>
    </citation>
    <scope>NUCLEOTIDE SEQUENCE [LARGE SCALE MRNA] (ISOFORM 1)</scope>
    <scope>VARIANT ILE-275</scope>
    <source>
        <tissue>Brain</tissue>
    </source>
</reference>
<reference key="4">
    <citation type="journal article" date="2008" name="J. Proteome Res.">
        <title>Phosphoproteome of resting human platelets.</title>
        <authorList>
            <person name="Zahedi R.P."/>
            <person name="Lewandrowski U."/>
            <person name="Wiesner J."/>
            <person name="Wortelkamp S."/>
            <person name="Moebius J."/>
            <person name="Schuetz C."/>
            <person name="Walter U."/>
            <person name="Gambaryan S."/>
            <person name="Sickmann A."/>
        </authorList>
    </citation>
    <scope>PHOSPHORYLATION [LARGE SCALE ANALYSIS] AT SER-128</scope>
    <scope>IDENTIFICATION BY MASS SPECTROMETRY [LARGE SCALE ANALYSIS]</scope>
    <source>
        <tissue>Platelet</tissue>
    </source>
</reference>
<reference key="5">
    <citation type="journal article" date="2009" name="Sci. Signal.">
        <title>Quantitative phosphoproteomic analysis of T cell receptor signaling reveals system-wide modulation of protein-protein interactions.</title>
        <authorList>
            <person name="Mayya V."/>
            <person name="Lundgren D.H."/>
            <person name="Hwang S.-I."/>
            <person name="Rezaul K."/>
            <person name="Wu L."/>
            <person name="Eng J.K."/>
            <person name="Rodionov V."/>
            <person name="Han D.K."/>
        </authorList>
    </citation>
    <scope>PHOSPHORYLATION [LARGE SCALE ANALYSIS] AT SER-128</scope>
    <scope>IDENTIFICATION BY MASS SPECTROMETRY [LARGE SCALE ANALYSIS]</scope>
    <source>
        <tissue>Leukemic T-cell</tissue>
    </source>
</reference>
<reference key="6">
    <citation type="journal article" date="2013" name="J. Proteome Res.">
        <title>Toward a comprehensive characterization of a human cancer cell phosphoproteome.</title>
        <authorList>
            <person name="Zhou H."/>
            <person name="Di Palma S."/>
            <person name="Preisinger C."/>
            <person name="Peng M."/>
            <person name="Polat A.N."/>
            <person name="Heck A.J."/>
            <person name="Mohammed S."/>
        </authorList>
    </citation>
    <scope>PHOSPHORYLATION [LARGE SCALE ANALYSIS] AT SER-128</scope>
    <scope>IDENTIFICATION BY MASS SPECTROMETRY [LARGE SCALE ANALYSIS]</scope>
    <source>
        <tissue>Erythroleukemia</tissue>
    </source>
</reference>
<reference key="7">
    <citation type="submission" date="2005-11" db="PDB data bank">
        <title>Solution structure of the C-terminal PH domain of FYVE, RhoGEF and PH domain containing protein 3 (FGD3) from human.</title>
        <authorList>
            <consortium name="RIKEN structural genomics initiative (RSGI)"/>
        </authorList>
    </citation>
    <scope>STRUCTURE BY NMR OF 605-703</scope>
</reference>
<keyword id="KW-0002">3D-structure</keyword>
<keyword id="KW-0025">Alternative splicing</keyword>
<keyword id="KW-0963">Cytoplasm</keyword>
<keyword id="KW-0206">Cytoskeleton</keyword>
<keyword id="KW-0344">Guanine-nucleotide releasing factor</keyword>
<keyword id="KW-0479">Metal-binding</keyword>
<keyword id="KW-0597">Phosphoprotein</keyword>
<keyword id="KW-1267">Proteomics identification</keyword>
<keyword id="KW-1185">Reference proteome</keyword>
<keyword id="KW-0677">Repeat</keyword>
<keyword id="KW-0862">Zinc</keyword>
<keyword id="KW-0863">Zinc-finger</keyword>
<evidence type="ECO:0000250" key="1"/>
<evidence type="ECO:0000255" key="2">
    <source>
        <dbReference type="PROSITE-ProRule" id="PRU00062"/>
    </source>
</evidence>
<evidence type="ECO:0000255" key="3">
    <source>
        <dbReference type="PROSITE-ProRule" id="PRU00091"/>
    </source>
</evidence>
<evidence type="ECO:0000255" key="4">
    <source>
        <dbReference type="PROSITE-ProRule" id="PRU00145"/>
    </source>
</evidence>
<evidence type="ECO:0000256" key="5">
    <source>
        <dbReference type="SAM" id="MobiDB-lite"/>
    </source>
</evidence>
<evidence type="ECO:0000269" key="6">
    <source>
    </source>
</evidence>
<evidence type="ECO:0000303" key="7">
    <source ref="1"/>
</evidence>
<evidence type="ECO:0000305" key="8"/>
<evidence type="ECO:0007744" key="9">
    <source>
    </source>
</evidence>
<evidence type="ECO:0007744" key="10">
    <source>
    </source>
</evidence>
<evidence type="ECO:0007744" key="11">
    <source>
    </source>
</evidence>
<evidence type="ECO:0007829" key="12">
    <source>
        <dbReference type="PDB" id="2COC"/>
    </source>
</evidence>
<sequence>MESGRGSSTPPGPIAALGMPDTGPGSSSLGKLQALPVGPRAHCGDPVSLAAAGDGSPDIGPTGELSGSLKIPNRDSGIDSPSSSVAGENFPCEEGLEAGPSPTVLGAHAEMALDSQVPKVTPQEEADSDVGEEPDSENTPQKADKDAGLAQHSGPQKLLHIAQELLHTEETYVKRLHLLDQVFCTRLTDAGIPPEVIMGIFSNISSIHRFHGQFLLPELKTRITEEWDTNPRLGDILQKLAPFLKMYGEYVKNFDRAVGLVSTWTQRSPLFKDVVHSIQKQEVCGNLTLQHHMLEPVQRVPRYELLLKDYLKRLPQDAPDRKDAERSLELISTAANHSNAAIRKVEKMHKLLEVYEQLGGEEDIVNPANELIKEGQIQKLSAKNGTPQDRHLFLFNSMILYCVPKLRLMGQKFSVREKMDISGLQVQDIVKPNTAHTFIITGRKRSLELQTRTEEEKKEWIQIIQATIEKHKQNSETFKAFGGAFSQDEDPSLSPDMPITSTSPVEPVVTTEGSSGAAGLEPRKLSSKTRRDKEKQSCKSCGETFNSITKRRHHCKLCGAVICGKCSEFKAENSRQSRVCRDCFLTQPVAPESTEKTPTADPQPSLLCGPLRLSESGETWSEVWAAIPMSDPQVLHLQGGSQDGRLPRTIPLPSCKLSVPDPEERLDSGHVWKLQWAKQSWYLSASSAELQQQWLETLSTAAHGDTAQDSPGALQLQVPMGAAAP</sequence>